<name>M34_CONMR</name>
<sequence>MSKLGVLLTICLLLFPLTAVPLDGDQPADRPAERMQDDISSERHPFFDRSKQCCHLPACRFGCTPCCW</sequence>
<dbReference type="ConoServer" id="1469">
    <property type="toxin name" value="Mr3.4 precursor"/>
</dbReference>
<dbReference type="GO" id="GO:0005576">
    <property type="term" value="C:extracellular region"/>
    <property type="evidence" value="ECO:0007669"/>
    <property type="project" value="UniProtKB-SubCell"/>
</dbReference>
<dbReference type="GO" id="GO:0008200">
    <property type="term" value="F:ion channel inhibitor activity"/>
    <property type="evidence" value="ECO:0007669"/>
    <property type="project" value="InterPro"/>
</dbReference>
<dbReference type="GO" id="GO:0090729">
    <property type="term" value="F:toxin activity"/>
    <property type="evidence" value="ECO:0007669"/>
    <property type="project" value="UniProtKB-KW"/>
</dbReference>
<dbReference type="InterPro" id="IPR004214">
    <property type="entry name" value="Conotoxin"/>
</dbReference>
<dbReference type="InterPro" id="IPR018072">
    <property type="entry name" value="Conotoxin_a-typ_CS"/>
</dbReference>
<dbReference type="Pfam" id="PF02950">
    <property type="entry name" value="Conotoxin"/>
    <property type="match status" value="1"/>
</dbReference>
<dbReference type="PROSITE" id="PS60014">
    <property type="entry name" value="ALPHA_CONOTOXIN"/>
    <property type="match status" value="1"/>
</dbReference>
<feature type="signal peptide" evidence="3">
    <location>
        <begin position="1"/>
        <end position="19"/>
    </location>
</feature>
<feature type="propeptide" id="PRO_0000246043" evidence="1">
    <location>
        <begin position="20"/>
        <end position="49"/>
    </location>
</feature>
<feature type="peptide" id="PRO_0000246044" description="Conotoxin Mr3.4">
    <location>
        <begin position="50"/>
        <end position="68"/>
    </location>
</feature>
<feature type="modified residue" description="4-hydroxyproline" evidence="1">
    <location>
        <position position="65"/>
    </location>
</feature>
<feature type="disulfide bond" evidence="2">
    <location>
        <begin position="53"/>
        <end position="67"/>
    </location>
</feature>
<feature type="disulfide bond" evidence="2">
    <location>
        <begin position="54"/>
        <end position="63"/>
    </location>
</feature>
<feature type="disulfide bond" evidence="2">
    <location>
        <begin position="59"/>
        <end position="66"/>
    </location>
</feature>
<proteinExistence type="evidence at transcript level"/>
<organism>
    <name type="scientific">Conus marmoreus</name>
    <name type="common">Marble cone</name>
    <dbReference type="NCBI Taxonomy" id="42752"/>
    <lineage>
        <taxon>Eukaryota</taxon>
        <taxon>Metazoa</taxon>
        <taxon>Spiralia</taxon>
        <taxon>Lophotrochozoa</taxon>
        <taxon>Mollusca</taxon>
        <taxon>Gastropoda</taxon>
        <taxon>Caenogastropoda</taxon>
        <taxon>Neogastropoda</taxon>
        <taxon>Conoidea</taxon>
        <taxon>Conidae</taxon>
        <taxon>Conus</taxon>
    </lineage>
</organism>
<reference key="1">
    <citation type="journal article" date="2005" name="Biochemistry">
        <title>Definition of the M-conotoxin superfamily: characterization of novel peptides from molluscivorous Conus venoms.</title>
        <authorList>
            <person name="Corpuz G.P."/>
            <person name="Jacobsen R.B."/>
            <person name="Jimenez E.C."/>
            <person name="Watkins M."/>
            <person name="Walker C."/>
            <person name="Colledge C."/>
            <person name="Garrett J.E."/>
            <person name="McDougal O."/>
            <person name="Li W."/>
            <person name="Gray W.R."/>
            <person name="Hillyard D.R."/>
            <person name="Rivier J."/>
            <person name="McIntosh J.M."/>
            <person name="Cruz L.J."/>
            <person name="Olivera B.M."/>
        </authorList>
    </citation>
    <scope>NUCLEOTIDE SEQUENCE [MRNA]</scope>
    <source>
        <tissue>Venom duct</tissue>
    </source>
</reference>
<accession>P0C1N3</accession>
<protein>
    <recommendedName>
        <fullName>Conotoxin Mr3.4</fullName>
    </recommendedName>
</protein>
<evidence type="ECO:0000250" key="1"/>
<evidence type="ECO:0000250" key="2">
    <source>
        <dbReference type="UniProtKB" id="P0CI24"/>
    </source>
</evidence>
<evidence type="ECO:0000255" key="3"/>
<evidence type="ECO:0000305" key="4"/>
<comment type="subcellular location">
    <subcellularLocation>
        <location evidence="1">Secreted</location>
    </subcellularLocation>
</comment>
<comment type="tissue specificity">
    <text>Expressed by the venom duct.</text>
</comment>
<comment type="domain">
    <text>The cysteine framework is III (CC-C-C-CC). Classified in the M-2 branch, since 2 residues stand between the fourth and the fifth cysteine residues.</text>
</comment>
<comment type="similarity">
    <text evidence="4">Belongs to the conotoxin M superfamily.</text>
</comment>
<keyword id="KW-1015">Disulfide bond</keyword>
<keyword id="KW-0379">Hydroxylation</keyword>
<keyword id="KW-0964">Secreted</keyword>
<keyword id="KW-0732">Signal</keyword>
<keyword id="KW-0800">Toxin</keyword>